<protein>
    <recommendedName>
        <fullName>Uncharacterized N-acetyltransferase CgeE</fullName>
        <ecNumber>2.3.1.-</ecNumber>
    </recommendedName>
</protein>
<evidence type="ECO:0000255" key="1">
    <source>
        <dbReference type="PROSITE-ProRule" id="PRU00532"/>
    </source>
</evidence>
<evidence type="ECO:0000305" key="2"/>
<gene>
    <name type="primary">cgeE</name>
    <name type="synonym">cgeBC</name>
    <name type="ordered locus">BSU19750</name>
</gene>
<name>CGEE_BACSU</name>
<organism>
    <name type="scientific">Bacillus subtilis (strain 168)</name>
    <dbReference type="NCBI Taxonomy" id="224308"/>
    <lineage>
        <taxon>Bacteria</taxon>
        <taxon>Bacillati</taxon>
        <taxon>Bacillota</taxon>
        <taxon>Bacilli</taxon>
        <taxon>Bacillales</taxon>
        <taxon>Bacillaceae</taxon>
        <taxon>Bacillus</taxon>
    </lineage>
</organism>
<proteinExistence type="predicted"/>
<comment type="function">
    <text>May be involved in maturation of the outermost layer of the spore.</text>
</comment>
<comment type="sequence caution" evidence="2">
    <conflict type="erroneous initiation">
        <sequence resource="EMBL-CDS" id="AAB81153"/>
    </conflict>
</comment>
<sequence length="259" mass="29562">MTGHYSKTEHQYILLTSESASFDHYSVYRDPQLPQIFSHNFVQLHDTFPLERLLNFLPSVPKLLDANYLHLKASPQHVFPLGLKQSLVKSGFVVEDELLYDMKLSDWKGQMGHPLTAWGTAKSLSDGSSIMKIYDSIYIGEAIAEQKLKRKYPFYEADIIILVVCYSDQAQKVPIGCGELFIDHQEKTAKIEEVAILDQFQRKGYGSILVKEMLSIAKSLGMEAAYLVAASTDGATQFYEKLTFKKYERVHTVFHYFLT</sequence>
<reference key="1">
    <citation type="journal article" date="1998" name="DNA Res.">
        <title>Sequence analysis of the Bacillus subtilis 168 chromosome region between the sspC and odhA loci (184 degrees-180 degrees).</title>
        <authorList>
            <person name="Ghim S.-Y."/>
            <person name="Choi S.-K."/>
            <person name="Shin B.-S."/>
            <person name="Jeong Y.-M."/>
            <person name="Sorokin A."/>
            <person name="Ehrlich S.D."/>
            <person name="Park S.-H."/>
        </authorList>
    </citation>
    <scope>NUCLEOTIDE SEQUENCE [GENOMIC DNA]</scope>
    <source>
        <strain>168</strain>
    </source>
</reference>
<reference key="2">
    <citation type="journal article" date="1997" name="Nature">
        <title>The complete genome sequence of the Gram-positive bacterium Bacillus subtilis.</title>
        <authorList>
            <person name="Kunst F."/>
            <person name="Ogasawara N."/>
            <person name="Moszer I."/>
            <person name="Albertini A.M."/>
            <person name="Alloni G."/>
            <person name="Azevedo V."/>
            <person name="Bertero M.G."/>
            <person name="Bessieres P."/>
            <person name="Bolotin A."/>
            <person name="Borchert S."/>
            <person name="Borriss R."/>
            <person name="Boursier L."/>
            <person name="Brans A."/>
            <person name="Braun M."/>
            <person name="Brignell S.C."/>
            <person name="Bron S."/>
            <person name="Brouillet S."/>
            <person name="Bruschi C.V."/>
            <person name="Caldwell B."/>
            <person name="Capuano V."/>
            <person name="Carter N.M."/>
            <person name="Choi S.-K."/>
            <person name="Codani J.-J."/>
            <person name="Connerton I.F."/>
            <person name="Cummings N.J."/>
            <person name="Daniel R.A."/>
            <person name="Denizot F."/>
            <person name="Devine K.M."/>
            <person name="Duesterhoeft A."/>
            <person name="Ehrlich S.D."/>
            <person name="Emmerson P.T."/>
            <person name="Entian K.-D."/>
            <person name="Errington J."/>
            <person name="Fabret C."/>
            <person name="Ferrari E."/>
            <person name="Foulger D."/>
            <person name="Fritz C."/>
            <person name="Fujita M."/>
            <person name="Fujita Y."/>
            <person name="Fuma S."/>
            <person name="Galizzi A."/>
            <person name="Galleron N."/>
            <person name="Ghim S.-Y."/>
            <person name="Glaser P."/>
            <person name="Goffeau A."/>
            <person name="Golightly E.J."/>
            <person name="Grandi G."/>
            <person name="Guiseppi G."/>
            <person name="Guy B.J."/>
            <person name="Haga K."/>
            <person name="Haiech J."/>
            <person name="Harwood C.R."/>
            <person name="Henaut A."/>
            <person name="Hilbert H."/>
            <person name="Holsappel S."/>
            <person name="Hosono S."/>
            <person name="Hullo M.-F."/>
            <person name="Itaya M."/>
            <person name="Jones L.-M."/>
            <person name="Joris B."/>
            <person name="Karamata D."/>
            <person name="Kasahara Y."/>
            <person name="Klaerr-Blanchard M."/>
            <person name="Klein C."/>
            <person name="Kobayashi Y."/>
            <person name="Koetter P."/>
            <person name="Koningstein G."/>
            <person name="Krogh S."/>
            <person name="Kumano M."/>
            <person name="Kurita K."/>
            <person name="Lapidus A."/>
            <person name="Lardinois S."/>
            <person name="Lauber J."/>
            <person name="Lazarevic V."/>
            <person name="Lee S.-M."/>
            <person name="Levine A."/>
            <person name="Liu H."/>
            <person name="Masuda S."/>
            <person name="Mauel C."/>
            <person name="Medigue C."/>
            <person name="Medina N."/>
            <person name="Mellado R.P."/>
            <person name="Mizuno M."/>
            <person name="Moestl D."/>
            <person name="Nakai S."/>
            <person name="Noback M."/>
            <person name="Noone D."/>
            <person name="O'Reilly M."/>
            <person name="Ogawa K."/>
            <person name="Ogiwara A."/>
            <person name="Oudega B."/>
            <person name="Park S.-H."/>
            <person name="Parro V."/>
            <person name="Pohl T.M."/>
            <person name="Portetelle D."/>
            <person name="Porwollik S."/>
            <person name="Prescott A.M."/>
            <person name="Presecan E."/>
            <person name="Pujic P."/>
            <person name="Purnelle B."/>
            <person name="Rapoport G."/>
            <person name="Rey M."/>
            <person name="Reynolds S."/>
            <person name="Rieger M."/>
            <person name="Rivolta C."/>
            <person name="Rocha E."/>
            <person name="Roche B."/>
            <person name="Rose M."/>
            <person name="Sadaie Y."/>
            <person name="Sato T."/>
            <person name="Scanlan E."/>
            <person name="Schleich S."/>
            <person name="Schroeter R."/>
            <person name="Scoffone F."/>
            <person name="Sekiguchi J."/>
            <person name="Sekowska A."/>
            <person name="Seror S.J."/>
            <person name="Serror P."/>
            <person name="Shin B.-S."/>
            <person name="Soldo B."/>
            <person name="Sorokin A."/>
            <person name="Tacconi E."/>
            <person name="Takagi T."/>
            <person name="Takahashi H."/>
            <person name="Takemaru K."/>
            <person name="Takeuchi M."/>
            <person name="Tamakoshi A."/>
            <person name="Tanaka T."/>
            <person name="Terpstra P."/>
            <person name="Tognoni A."/>
            <person name="Tosato V."/>
            <person name="Uchiyama S."/>
            <person name="Vandenbol M."/>
            <person name="Vannier F."/>
            <person name="Vassarotti A."/>
            <person name="Viari A."/>
            <person name="Wambutt R."/>
            <person name="Wedler E."/>
            <person name="Wedler H."/>
            <person name="Weitzenegger T."/>
            <person name="Winters P."/>
            <person name="Wipat A."/>
            <person name="Yamamoto H."/>
            <person name="Yamane K."/>
            <person name="Yasumoto K."/>
            <person name="Yata K."/>
            <person name="Yoshida K."/>
            <person name="Yoshikawa H.-F."/>
            <person name="Zumstein E."/>
            <person name="Yoshikawa H."/>
            <person name="Danchin A."/>
        </authorList>
    </citation>
    <scope>NUCLEOTIDE SEQUENCE [LARGE SCALE GENOMIC DNA]</scope>
    <source>
        <strain>168</strain>
    </source>
</reference>
<reference key="3">
    <citation type="journal article" date="1995" name="J. Bacteriol.">
        <title>Adjacent and divergently oriented operons under the control of the sporulation regulatory protein GerE in Bacillus subtilis.</title>
        <authorList>
            <person name="Roels S."/>
            <person name="Losick R."/>
        </authorList>
    </citation>
    <scope>NUCLEOTIDE SEQUENCE [GENOMIC DNA] OF 1-104</scope>
    <source>
        <strain>168</strain>
    </source>
</reference>
<keyword id="KW-0012">Acyltransferase</keyword>
<keyword id="KW-1185">Reference proteome</keyword>
<keyword id="KW-0808">Transferase</keyword>
<feature type="chain" id="PRO_0000089599" description="Uncharacterized N-acetyltransferase CgeE">
    <location>
        <begin position="1"/>
        <end position="259"/>
    </location>
</feature>
<feature type="domain" description="N-acetyltransferase" evidence="1">
    <location>
        <begin position="110"/>
        <end position="259"/>
    </location>
</feature>
<accession>P42093</accession>
<accession>O54516</accession>
<dbReference type="EC" id="2.3.1.-"/>
<dbReference type="EMBL" id="AF015775">
    <property type="protein sequence ID" value="AAB72075.1"/>
    <property type="molecule type" value="Genomic_DNA"/>
</dbReference>
<dbReference type="EMBL" id="AF006665">
    <property type="protein sequence ID" value="AAB81153.1"/>
    <property type="status" value="ALT_INIT"/>
    <property type="molecule type" value="Genomic_DNA"/>
</dbReference>
<dbReference type="EMBL" id="AL009126">
    <property type="protein sequence ID" value="CAB13866.1"/>
    <property type="molecule type" value="Genomic_DNA"/>
</dbReference>
<dbReference type="EMBL" id="U18421">
    <property type="protein sequence ID" value="AAA87717.1"/>
    <property type="molecule type" value="Genomic_DNA"/>
</dbReference>
<dbReference type="PIR" id="D69598">
    <property type="entry name" value="D69598"/>
</dbReference>
<dbReference type="RefSeq" id="NP_389856.1">
    <property type="nucleotide sequence ID" value="NC_000964.3"/>
</dbReference>
<dbReference type="RefSeq" id="WP_003230830.1">
    <property type="nucleotide sequence ID" value="NZ_OZ025638.1"/>
</dbReference>
<dbReference type="SMR" id="P42093"/>
<dbReference type="FunCoup" id="P42093">
    <property type="interactions" value="3"/>
</dbReference>
<dbReference type="STRING" id="224308.BSU19750"/>
<dbReference type="PaxDb" id="224308-BSU19750"/>
<dbReference type="DNASU" id="940064"/>
<dbReference type="EnsemblBacteria" id="CAB13866">
    <property type="protein sequence ID" value="CAB13866"/>
    <property type="gene ID" value="BSU_19750"/>
</dbReference>
<dbReference type="GeneID" id="940064"/>
<dbReference type="KEGG" id="bsu:BSU19750"/>
<dbReference type="PATRIC" id="fig|224308.179.peg.2164"/>
<dbReference type="eggNOG" id="COG0456">
    <property type="taxonomic scope" value="Bacteria"/>
</dbReference>
<dbReference type="InParanoid" id="P42093"/>
<dbReference type="OrthoDB" id="2463977at2"/>
<dbReference type="BioCyc" id="BSUB:BSU19750-MONOMER"/>
<dbReference type="Proteomes" id="UP000001570">
    <property type="component" value="Chromosome"/>
</dbReference>
<dbReference type="GO" id="GO:0016747">
    <property type="term" value="F:acyltransferase activity, transferring groups other than amino-acyl groups"/>
    <property type="evidence" value="ECO:0007669"/>
    <property type="project" value="InterPro"/>
</dbReference>
<dbReference type="CDD" id="cd04301">
    <property type="entry name" value="NAT_SF"/>
    <property type="match status" value="1"/>
</dbReference>
<dbReference type="Gene3D" id="3.40.630.30">
    <property type="match status" value="1"/>
</dbReference>
<dbReference type="InterPro" id="IPR016181">
    <property type="entry name" value="Acyl_CoA_acyltransferase"/>
</dbReference>
<dbReference type="InterPro" id="IPR000182">
    <property type="entry name" value="GNAT_dom"/>
</dbReference>
<dbReference type="InterPro" id="IPR039143">
    <property type="entry name" value="GNPNAT1-like"/>
</dbReference>
<dbReference type="PANTHER" id="PTHR13355">
    <property type="entry name" value="GLUCOSAMINE 6-PHOSPHATE N-ACETYLTRANSFERASE"/>
    <property type="match status" value="1"/>
</dbReference>
<dbReference type="Pfam" id="PF00583">
    <property type="entry name" value="Acetyltransf_1"/>
    <property type="match status" value="1"/>
</dbReference>
<dbReference type="SUPFAM" id="SSF55729">
    <property type="entry name" value="Acyl-CoA N-acyltransferases (Nat)"/>
    <property type="match status" value="1"/>
</dbReference>
<dbReference type="PROSITE" id="PS51186">
    <property type="entry name" value="GNAT"/>
    <property type="match status" value="1"/>
</dbReference>